<reference key="1">
    <citation type="journal article" date="2004" name="Nucleic Acids Res.">
        <title>Whole genome comparisons of serotype 4b and 1/2a strains of the food-borne pathogen Listeria monocytogenes reveal new insights into the core genome components of this species.</title>
        <authorList>
            <person name="Nelson K.E."/>
            <person name="Fouts D.E."/>
            <person name="Mongodin E.F."/>
            <person name="Ravel J."/>
            <person name="DeBoy R.T."/>
            <person name="Kolonay J.F."/>
            <person name="Rasko D.A."/>
            <person name="Angiuoli S.V."/>
            <person name="Gill S.R."/>
            <person name="Paulsen I.T."/>
            <person name="Peterson J.D."/>
            <person name="White O."/>
            <person name="Nelson W.C."/>
            <person name="Nierman W.C."/>
            <person name="Beanan M.J."/>
            <person name="Brinkac L.M."/>
            <person name="Daugherty S.C."/>
            <person name="Dodson R.J."/>
            <person name="Durkin A.S."/>
            <person name="Madupu R."/>
            <person name="Haft D.H."/>
            <person name="Selengut J."/>
            <person name="Van Aken S.E."/>
            <person name="Khouri H.M."/>
            <person name="Fedorova N."/>
            <person name="Forberger H.A."/>
            <person name="Tran B."/>
            <person name="Kathariou S."/>
            <person name="Wonderling L.D."/>
            <person name="Uhlich G.A."/>
            <person name="Bayles D.O."/>
            <person name="Luchansky J.B."/>
            <person name="Fraser C.M."/>
        </authorList>
    </citation>
    <scope>NUCLEOTIDE SEQUENCE [LARGE SCALE GENOMIC DNA]</scope>
    <source>
        <strain>F2365</strain>
    </source>
</reference>
<protein>
    <recommendedName>
        <fullName evidence="1">Small ribosomal subunit protein uS11</fullName>
    </recommendedName>
    <alternativeName>
        <fullName evidence="2">30S ribosomal protein S11</fullName>
    </alternativeName>
</protein>
<gene>
    <name evidence="1" type="primary">rpsK</name>
    <name type="ordered locus">LMOf2365_2580</name>
</gene>
<dbReference type="EMBL" id="AE017262">
    <property type="protein sequence ID" value="AAT05345.1"/>
    <property type="molecule type" value="Genomic_DNA"/>
</dbReference>
<dbReference type="RefSeq" id="WP_003720926.1">
    <property type="nucleotide sequence ID" value="NC_002973.6"/>
</dbReference>
<dbReference type="SMR" id="Q71WH1"/>
<dbReference type="GeneID" id="93240488"/>
<dbReference type="KEGG" id="lmf:LMOf2365_2580"/>
<dbReference type="HOGENOM" id="CLU_072439_5_0_9"/>
<dbReference type="GO" id="GO:1990904">
    <property type="term" value="C:ribonucleoprotein complex"/>
    <property type="evidence" value="ECO:0007669"/>
    <property type="project" value="UniProtKB-KW"/>
</dbReference>
<dbReference type="GO" id="GO:0005840">
    <property type="term" value="C:ribosome"/>
    <property type="evidence" value="ECO:0007669"/>
    <property type="project" value="UniProtKB-KW"/>
</dbReference>
<dbReference type="GO" id="GO:0019843">
    <property type="term" value="F:rRNA binding"/>
    <property type="evidence" value="ECO:0007669"/>
    <property type="project" value="UniProtKB-UniRule"/>
</dbReference>
<dbReference type="GO" id="GO:0003735">
    <property type="term" value="F:structural constituent of ribosome"/>
    <property type="evidence" value="ECO:0007669"/>
    <property type="project" value="InterPro"/>
</dbReference>
<dbReference type="GO" id="GO:0006412">
    <property type="term" value="P:translation"/>
    <property type="evidence" value="ECO:0007669"/>
    <property type="project" value="UniProtKB-UniRule"/>
</dbReference>
<dbReference type="FunFam" id="3.30.420.80:FF:000001">
    <property type="entry name" value="30S ribosomal protein S11"/>
    <property type="match status" value="1"/>
</dbReference>
<dbReference type="Gene3D" id="3.30.420.80">
    <property type="entry name" value="Ribosomal protein S11"/>
    <property type="match status" value="1"/>
</dbReference>
<dbReference type="HAMAP" id="MF_01310">
    <property type="entry name" value="Ribosomal_uS11"/>
    <property type="match status" value="1"/>
</dbReference>
<dbReference type="InterPro" id="IPR001971">
    <property type="entry name" value="Ribosomal_uS11"/>
</dbReference>
<dbReference type="InterPro" id="IPR019981">
    <property type="entry name" value="Ribosomal_uS11_bac-type"/>
</dbReference>
<dbReference type="InterPro" id="IPR018102">
    <property type="entry name" value="Ribosomal_uS11_CS"/>
</dbReference>
<dbReference type="InterPro" id="IPR036967">
    <property type="entry name" value="Ribosomal_uS11_sf"/>
</dbReference>
<dbReference type="NCBIfam" id="NF003698">
    <property type="entry name" value="PRK05309.1"/>
    <property type="match status" value="1"/>
</dbReference>
<dbReference type="NCBIfam" id="TIGR03632">
    <property type="entry name" value="uS11_bact"/>
    <property type="match status" value="1"/>
</dbReference>
<dbReference type="PANTHER" id="PTHR11759">
    <property type="entry name" value="40S RIBOSOMAL PROTEIN S14/30S RIBOSOMAL PROTEIN S11"/>
    <property type="match status" value="1"/>
</dbReference>
<dbReference type="Pfam" id="PF00411">
    <property type="entry name" value="Ribosomal_S11"/>
    <property type="match status" value="1"/>
</dbReference>
<dbReference type="PIRSF" id="PIRSF002131">
    <property type="entry name" value="Ribosomal_S11"/>
    <property type="match status" value="1"/>
</dbReference>
<dbReference type="SUPFAM" id="SSF53137">
    <property type="entry name" value="Translational machinery components"/>
    <property type="match status" value="1"/>
</dbReference>
<dbReference type="PROSITE" id="PS00054">
    <property type="entry name" value="RIBOSOMAL_S11"/>
    <property type="match status" value="1"/>
</dbReference>
<organism>
    <name type="scientific">Listeria monocytogenes serotype 4b (strain F2365)</name>
    <dbReference type="NCBI Taxonomy" id="265669"/>
    <lineage>
        <taxon>Bacteria</taxon>
        <taxon>Bacillati</taxon>
        <taxon>Bacillota</taxon>
        <taxon>Bacilli</taxon>
        <taxon>Bacillales</taxon>
        <taxon>Listeriaceae</taxon>
        <taxon>Listeria</taxon>
    </lineage>
</organism>
<name>RS11_LISMF</name>
<keyword id="KW-0687">Ribonucleoprotein</keyword>
<keyword id="KW-0689">Ribosomal protein</keyword>
<keyword id="KW-0694">RNA-binding</keyword>
<keyword id="KW-0699">rRNA-binding</keyword>
<feature type="chain" id="PRO_0000123169" description="Small ribosomal subunit protein uS11">
    <location>
        <begin position="1"/>
        <end position="129"/>
    </location>
</feature>
<proteinExistence type="inferred from homology"/>
<evidence type="ECO:0000255" key="1">
    <source>
        <dbReference type="HAMAP-Rule" id="MF_01310"/>
    </source>
</evidence>
<evidence type="ECO:0000305" key="2"/>
<sequence>MARKTNTRKRRVKKNIESGIAHIRSTFNNTIVMITDTHGNALAWSSAGSLGFKGSRKSTPFAAQMAAESAAKSAQEHGLKTLEVTVKGPGSGREAAIRALQAAGLEVTAIKDVTPVPHNGCRPPKRRRV</sequence>
<comment type="function">
    <text evidence="1">Located on the platform of the 30S subunit, it bridges several disparate RNA helices of the 16S rRNA. Forms part of the Shine-Dalgarno cleft in the 70S ribosome.</text>
</comment>
<comment type="subunit">
    <text evidence="1">Part of the 30S ribosomal subunit. Interacts with proteins S7 and S18. Binds to IF-3.</text>
</comment>
<comment type="similarity">
    <text evidence="1">Belongs to the universal ribosomal protein uS11 family.</text>
</comment>
<accession>Q71WH1</accession>